<feature type="chain" id="PRO_0000297490" description="Ras-related protein Rab-8A">
    <location>
        <begin position="1"/>
        <end position="204"/>
    </location>
</feature>
<feature type="propeptide" id="PRO_0000370791" description="Removed in mature form" evidence="8">
    <location>
        <begin position="205"/>
        <end position="207"/>
    </location>
</feature>
<feature type="short sequence motif" description="Switch 1" evidence="6">
    <location>
        <begin position="31"/>
        <end position="45"/>
    </location>
</feature>
<feature type="short sequence motif" description="Switch 2" evidence="6">
    <location>
        <begin position="63"/>
        <end position="80"/>
    </location>
</feature>
<feature type="binding site" evidence="4">
    <location>
        <position position="17"/>
    </location>
    <ligand>
        <name>GTP</name>
        <dbReference type="ChEBI" id="CHEBI:37565"/>
    </ligand>
</feature>
<feature type="binding site" evidence="4">
    <location>
        <position position="18"/>
    </location>
    <ligand>
        <name>GTP</name>
        <dbReference type="ChEBI" id="CHEBI:37565"/>
    </ligand>
</feature>
<feature type="binding site" evidence="4">
    <location>
        <position position="19"/>
    </location>
    <ligand>
        <name>GTP</name>
        <dbReference type="ChEBI" id="CHEBI:37565"/>
    </ligand>
</feature>
<feature type="binding site" evidence="4">
    <location>
        <position position="20"/>
    </location>
    <ligand>
        <name>GTP</name>
        <dbReference type="ChEBI" id="CHEBI:37565"/>
    </ligand>
</feature>
<feature type="binding site" evidence="4">
    <location>
        <position position="21"/>
    </location>
    <ligand>
        <name>GTP</name>
        <dbReference type="ChEBI" id="CHEBI:37565"/>
    </ligand>
</feature>
<feature type="binding site" evidence="4">
    <location>
        <position position="22"/>
    </location>
    <ligand>
        <name>GTP</name>
        <dbReference type="ChEBI" id="CHEBI:37565"/>
    </ligand>
</feature>
<feature type="binding site" evidence="4">
    <location>
        <position position="22"/>
    </location>
    <ligand>
        <name>Mg(2+)</name>
        <dbReference type="ChEBI" id="CHEBI:18420"/>
    </ligand>
</feature>
<feature type="binding site" evidence="4">
    <location>
        <position position="23"/>
    </location>
    <ligand>
        <name>GTP</name>
        <dbReference type="ChEBI" id="CHEBI:37565"/>
    </ligand>
</feature>
<feature type="binding site" evidence="4">
    <location>
        <position position="35"/>
    </location>
    <ligand>
        <name>GTP</name>
        <dbReference type="ChEBI" id="CHEBI:37565"/>
    </ligand>
</feature>
<feature type="binding site" evidence="4">
    <location>
        <position position="39"/>
    </location>
    <ligand>
        <name>GTP</name>
        <dbReference type="ChEBI" id="CHEBI:37565"/>
    </ligand>
</feature>
<feature type="binding site" evidence="4">
    <location>
        <position position="40"/>
    </location>
    <ligand>
        <name>GTP</name>
        <dbReference type="ChEBI" id="CHEBI:37565"/>
    </ligand>
</feature>
<feature type="binding site" evidence="4">
    <location>
        <position position="40"/>
    </location>
    <ligand>
        <name>Mg(2+)</name>
        <dbReference type="ChEBI" id="CHEBI:18420"/>
    </ligand>
</feature>
<feature type="binding site" evidence="4">
    <location>
        <position position="63"/>
    </location>
    <ligand>
        <name>Mg(2+)</name>
        <dbReference type="ChEBI" id="CHEBI:18420"/>
    </ligand>
</feature>
<feature type="binding site" evidence="4">
    <location>
        <position position="66"/>
    </location>
    <ligand>
        <name>GTP</name>
        <dbReference type="ChEBI" id="CHEBI:37565"/>
    </ligand>
</feature>
<feature type="binding site" evidence="4">
    <location>
        <position position="121"/>
    </location>
    <ligand>
        <name>GTP</name>
        <dbReference type="ChEBI" id="CHEBI:37565"/>
    </ligand>
</feature>
<feature type="binding site" evidence="4">
    <location>
        <position position="122"/>
    </location>
    <ligand>
        <name>GTP</name>
        <dbReference type="ChEBI" id="CHEBI:37565"/>
    </ligand>
</feature>
<feature type="binding site" evidence="4">
    <location>
        <position position="124"/>
    </location>
    <ligand>
        <name>GTP</name>
        <dbReference type="ChEBI" id="CHEBI:37565"/>
    </ligand>
</feature>
<feature type="binding site" evidence="4">
    <location>
        <position position="152"/>
    </location>
    <ligand>
        <name>GTP</name>
        <dbReference type="ChEBI" id="CHEBI:37565"/>
    </ligand>
</feature>
<feature type="binding site" evidence="4">
    <location>
        <position position="153"/>
    </location>
    <ligand>
        <name>GTP</name>
        <dbReference type="ChEBI" id="CHEBI:37565"/>
    </ligand>
</feature>
<feature type="modified residue" description="Phosphothreonine" evidence="4">
    <location>
        <position position="72"/>
    </location>
</feature>
<feature type="modified residue" description="Phosphoserine" evidence="4">
    <location>
        <position position="181"/>
    </location>
</feature>
<feature type="modified residue" description="Phosphoserine" evidence="4">
    <location>
        <position position="185"/>
    </location>
</feature>
<feature type="modified residue" description="Cysteine methyl ester" evidence="8">
    <location>
        <position position="204"/>
    </location>
</feature>
<feature type="lipid moiety-binding region" description="S-geranylgeranyl cysteine" evidence="1">
    <location>
        <position position="204"/>
    </location>
</feature>
<gene>
    <name type="primary">RAB8A</name>
</gene>
<evidence type="ECO:0000250" key="1"/>
<evidence type="ECO:0000250" key="2">
    <source>
        <dbReference type="UniProtKB" id="P35280"/>
    </source>
</evidence>
<evidence type="ECO:0000250" key="3">
    <source>
        <dbReference type="UniProtKB" id="P55258"/>
    </source>
</evidence>
<evidence type="ECO:0000250" key="4">
    <source>
        <dbReference type="UniProtKB" id="P61006"/>
    </source>
</evidence>
<evidence type="ECO:0000250" key="5">
    <source>
        <dbReference type="UniProtKB" id="P61007"/>
    </source>
</evidence>
<evidence type="ECO:0000250" key="6">
    <source>
        <dbReference type="UniProtKB" id="P62820"/>
    </source>
</evidence>
<evidence type="ECO:0000250" key="7">
    <source>
        <dbReference type="UniProtKB" id="Q92930"/>
    </source>
</evidence>
<evidence type="ECO:0000255" key="8"/>
<evidence type="ECO:0000269" key="9">
    <source>
    </source>
</evidence>
<evidence type="ECO:0000305" key="10"/>
<keyword id="KW-0072">Autophagy</keyword>
<keyword id="KW-1003">Cell membrane</keyword>
<keyword id="KW-0966">Cell projection</keyword>
<keyword id="KW-0969">Cilium</keyword>
<keyword id="KW-0970">Cilium biogenesis/degradation</keyword>
<keyword id="KW-0963">Cytoplasm</keyword>
<keyword id="KW-0968">Cytoplasmic vesicle</keyword>
<keyword id="KW-0206">Cytoskeleton</keyword>
<keyword id="KW-0967">Endosome</keyword>
<keyword id="KW-0333">Golgi apparatus</keyword>
<keyword id="KW-0342">GTP-binding</keyword>
<keyword id="KW-0378">Hydrolase</keyword>
<keyword id="KW-0449">Lipoprotein</keyword>
<keyword id="KW-0458">Lysosome</keyword>
<keyword id="KW-0460">Magnesium</keyword>
<keyword id="KW-0472">Membrane</keyword>
<keyword id="KW-0479">Metal-binding</keyword>
<keyword id="KW-0488">Methylation</keyword>
<keyword id="KW-0547">Nucleotide-binding</keyword>
<keyword id="KW-0597">Phosphoprotein</keyword>
<keyword id="KW-0636">Prenylation</keyword>
<keyword id="KW-0653">Protein transport</keyword>
<keyword id="KW-0656">Proto-oncogene</keyword>
<keyword id="KW-1185">Reference proteome</keyword>
<keyword id="KW-0813">Transport</keyword>
<comment type="function">
    <text evidence="2 3 4">The small GTPases Rab are key regulators of intracellular membrane trafficking, from the formation of transport vesicles to their fusion with membranes. Rabs cycle between an inactive GDP-bound form and an active GTP-bound form that is able to recruit to membranes different sets of downstream effectors directly responsible for vesicle formation, movement, tethering and fusion. RAB8A is involved in polarized vesicular trafficking and neurotransmitter release. Together with RAB11A, RAB3IP, the exocyst complex, PARD3, PRKCI, ANXA2, CDC42 and DNMBP promotes transcytosis of PODXL to the apical membrane initiation sites (AMIS), apical surface formation and lumenogenesis. Regulates the compacted morphology of the Golgi. Together with MYO5B and RAB11A participates in epithelial cell polarization. Also involved in membrane trafficking to the cilium and ciliogenesis (By similarity). Together with MICALL2, may also regulate adherens junction assembly (By similarity). May play a role in insulin-induced transport to the plasma membrane of the glucose transporter GLUT4 and therefore play a role in glucose homeostasis (By similarity). Involved in autophagy. Participates in the export of a subset of neosynthesized proteins through a Rab8-Rab10-Rab11-dependent endososomal export route. Targeted to and stabilized on stressed lysosomes through LRRK2 phosphorylation. Suppresses stress-induced lysosomal enlargement through EHBP1 and EHNP1L1 effector proteins (By similarity).</text>
</comment>
<comment type="catalytic activity">
    <reaction evidence="4">
        <text>GTP + H2O = GDP + phosphate + H(+)</text>
        <dbReference type="Rhea" id="RHEA:19669"/>
        <dbReference type="ChEBI" id="CHEBI:15377"/>
        <dbReference type="ChEBI" id="CHEBI:15378"/>
        <dbReference type="ChEBI" id="CHEBI:37565"/>
        <dbReference type="ChEBI" id="CHEBI:43474"/>
        <dbReference type="ChEBI" id="CHEBI:58189"/>
        <dbReference type="EC" id="3.6.5.2"/>
    </reaction>
    <physiologicalReaction direction="left-to-right" evidence="4">
        <dbReference type="Rhea" id="RHEA:19670"/>
    </physiologicalReaction>
</comment>
<comment type="cofactor">
    <cofactor evidence="4">
        <name>Mg(2+)</name>
        <dbReference type="ChEBI" id="CHEBI:18420"/>
    </cofactor>
</comment>
<comment type="activity regulation">
    <text evidence="2 4">Regulated by guanine nucleotide exchange factors (GEFs) such as RAB3IP/Rabin8 and RPGR which promote the exchange of bound GDP for free GTP, GTPase activating proteins (GAPs) which increase the GTP hydrolysis activity, and GDP dissociation inhibitors (GDIs) which inhibit the dissociation of the nucleotide from the GTPase (By similarity). Activated in response to insulin (By similarity).</text>
</comment>
<comment type="subunit">
    <text evidence="3 4 9">Interacts (GTP-bound form) with MICALL1; regulates RAB8A association with recycling endosomes (By similarity). Interacts with MICALL2; competes with RAB13 and is involved in E-cadherin endocytic recycling (By similarity). Interacts (GTP-bound form) with MICAL1, MICALCL, MICAL3, EHBP1 and EHBP1L1; at least in case of MICAL1, MICALCL, MICAL3 and EHBP1L1 two molecules of RAB8A can bind to one molecule of the effector protein; ternary complexes of RAB8A, RAB13 and either MICAL1 or EHBP1L1 are possible. Interacts with EHD1 (By similarity). Interacts with MAP4K2 and SYTL4 (By similarity). Interacts with SGSM1 and SGSM3 (By similarity). Interacts with RABIF, RIMS2, RPH3A and RPH3A (By similarity). Interacts with OPTN. Interacts with RAB3IP, RAB3IP functions as guanine exchange factor (GEF). Interacts with MYO5B. Interacts with CIMAP3. Interacts with BIRC6/bruce. Interacts with OCRL (By similarity). Interacts with AHI1 (By similarity). Interacts with DCDC1. Interacts with LRRK2; interaction facilitates phosphorylation of Thr-72. Interacts with RAB31P, GDI1, GDI2, CHM, CHML, RABGGTA, RABGGTB, TBC1D15 and INPP5B; these interactions are dependent on Thr-72 not being phosphorylated. Interacts with RILPL1 and RILPL2; these interactions are dependent on the phosphorylation of Thr-72 by LRRK2. Interacts with DZIP1; prevents inhibition by the GDP-dissociation inhibitor GDI2. Interacts (in GDP-bound form) with RAB3IP/Rabin8, RAB3IP functions as guanine exchange factor (GEF) towards RAB8A (By similarity). Interacts (in GDP-bound form) with RPGR, RPGR functions as GEF towards RAB8A (PubMed:20631154).</text>
</comment>
<comment type="subcellular location">
    <subcellularLocation>
        <location evidence="3">Cell membrane</location>
        <topology evidence="3">Lipid-anchor</topology>
        <orientation evidence="3">Cytoplasmic side</orientation>
    </subcellularLocation>
    <subcellularLocation>
        <location evidence="4">Golgi apparatus</location>
    </subcellularLocation>
    <subcellularLocation>
        <location evidence="4">Endosome membrane</location>
    </subcellularLocation>
    <subcellularLocation>
        <location evidence="4">Recycling endosome membrane</location>
    </subcellularLocation>
    <subcellularLocation>
        <location evidence="4">Cell projection</location>
        <location evidence="4">Cilium</location>
    </subcellularLocation>
    <subcellularLocation>
        <location evidence="4 7">Cytoplasmic vesicle</location>
        <location evidence="4 7">Phagosome membrane</location>
        <topology evidence="7">Lipid-anchor</topology>
        <orientation evidence="7">Cytoplasmic side</orientation>
    </subcellularLocation>
    <subcellularLocation>
        <location evidence="3">Cytoplasm</location>
        <location evidence="3">Cytoskeleton</location>
        <location evidence="3">Microtubule organizing center</location>
        <location evidence="3">Centrosome</location>
        <location evidence="3">Centriole</location>
    </subcellularLocation>
    <subcellularLocation>
        <location evidence="3">Cytoplasm</location>
        <location evidence="3">Cytoskeleton</location>
        <location evidence="3">Cilium basal body</location>
    </subcellularLocation>
    <subcellularLocation>
        <location evidence="4">Midbody</location>
    </subcellularLocation>
    <subcellularLocation>
        <location evidence="4">Cytoplasm</location>
    </subcellularLocation>
    <subcellularLocation>
        <location evidence="4">Lysosome</location>
    </subcellularLocation>
    <text evidence="4 5">Colocalizes with OPTN at the Golgi complex and in vesicular structures close to the plasma membrane. In the GDP-bound form, present in the perinuclear region. Shows a polarized distribution to distal regions of cell protrusions in the GTP-bound form. Colocalizes with PARD3, PRKCI, EXOC5, OCLN, PODXL and RAB11A in apical membrane initiation sites (AMIS) during the generation of apical surface and lumenogenesis. Localizes to tubular recycling endosome. Recruited to phagosomes containing S.aureus or Mycobacterium (By similarity). Non-phosphorylated RAB8A predominantly localizes to the cytoplasm whereas phosphorylated RAB8A localizes to the membrane (By similarity). Localizes to enlarged lysosomes through LRRK2 phosphorylation (By similarity). Colocalizes with RPGR at the primary cilia of epithelial cells (By similarity).</text>
</comment>
<comment type="domain">
    <text evidence="6">Switch 1, switch 2 and the interswitch regions are characteristic of Rab GTPases and mediate the interactions with Rab downstream effectors. The switch regions undergo conformational changes upon nucleotide binding which drives interaction with specific sets of effector proteins, with most effectors only binding to GTP-bound Rab.</text>
</comment>
<comment type="PTM">
    <text evidence="4">Phosphorylation of Thr-72 in the switch II region by LRRK2 prevents the association of RAB regulatory proteins, including CHM, CHML and RAB GDP dissociation inhibitors GDI1 and GDI2 (By similarity). Phosphorylation by LRRK2 is required for localization to stressed lysosomes (By similarity).</text>
</comment>
<comment type="similarity">
    <text evidence="10">Belongs to the small GTPase superfamily. Rab family.</text>
</comment>
<name>RAB8A_BOVIN</name>
<sequence length="207" mass="23684">MAKTYDYLFKLLLIGDSGVGKTCVLFRFSEDAFNSTFISTIGIDFKIRTIELDGKRIKLQIWDTAGQERFRTITTAYYRGAMGIMLVYDITNEKSFDNIRNWIRNIEEHASADVEKMILGNKCDVNDKRQVSKERGEKLALDYGIKFMETSAKANINVENAFYTLARDIKAKMDKKLEGNSPQGSNQGVKITPDQQKRSSFFRCVLL</sequence>
<accession>A4FV54</accession>
<organism>
    <name type="scientific">Bos taurus</name>
    <name type="common">Bovine</name>
    <dbReference type="NCBI Taxonomy" id="9913"/>
    <lineage>
        <taxon>Eukaryota</taxon>
        <taxon>Metazoa</taxon>
        <taxon>Chordata</taxon>
        <taxon>Craniata</taxon>
        <taxon>Vertebrata</taxon>
        <taxon>Euteleostomi</taxon>
        <taxon>Mammalia</taxon>
        <taxon>Eutheria</taxon>
        <taxon>Laurasiatheria</taxon>
        <taxon>Artiodactyla</taxon>
        <taxon>Ruminantia</taxon>
        <taxon>Pecora</taxon>
        <taxon>Bovidae</taxon>
        <taxon>Bovinae</taxon>
        <taxon>Bos</taxon>
    </lineage>
</organism>
<proteinExistence type="evidence at protein level"/>
<reference key="1">
    <citation type="submission" date="2006-09" db="EMBL/GenBank/DDBJ databases">
        <authorList>
            <consortium name="NIH - Mammalian Gene Collection (MGC) project"/>
        </authorList>
    </citation>
    <scope>NUCLEOTIDE SEQUENCE [LARGE SCALE MRNA]</scope>
    <source>
        <strain>Hereford</strain>
        <tissue>Brain cortex</tissue>
    </source>
</reference>
<reference key="2">
    <citation type="journal article" date="2010" name="Hum. Mol. Genet.">
        <title>Interaction of retinitis pigmentosa GTPase regulator (RPGR) with RAB8A GTPase: implications for cilia dysfunction and photoreceptor degeneration.</title>
        <authorList>
            <person name="Murga-Zamalloa C.A."/>
            <person name="Atkins S.J."/>
            <person name="Peranen J."/>
            <person name="Swaroop A."/>
            <person name="Khanna H."/>
        </authorList>
    </citation>
    <scope>INTERACTION WITH RPGR</scope>
</reference>
<protein>
    <recommendedName>
        <fullName>Ras-related protein Rab-8A</fullName>
        <ecNumber evidence="4">3.6.5.2</ecNumber>
    </recommendedName>
</protein>
<dbReference type="EC" id="3.6.5.2" evidence="4"/>
<dbReference type="EMBL" id="BC123755">
    <property type="protein sequence ID" value="AAI23756.1"/>
    <property type="molecule type" value="mRNA"/>
</dbReference>
<dbReference type="RefSeq" id="NP_001098951.1">
    <property type="nucleotide sequence ID" value="NM_001105481.1"/>
</dbReference>
<dbReference type="SMR" id="A4FV54"/>
<dbReference type="FunCoup" id="A4FV54">
    <property type="interactions" value="4116"/>
</dbReference>
<dbReference type="STRING" id="9913.ENSBTAP00000021408"/>
<dbReference type="PaxDb" id="9913-ENSBTAP00000021408"/>
<dbReference type="Ensembl" id="ENSBTAT00000021408.7">
    <property type="protein sequence ID" value="ENSBTAP00000021408.5"/>
    <property type="gene ID" value="ENSBTAG00000038696.4"/>
</dbReference>
<dbReference type="GeneID" id="100125881"/>
<dbReference type="KEGG" id="bta:100125881"/>
<dbReference type="CTD" id="4218"/>
<dbReference type="VEuPathDB" id="HostDB:ENSBTAG00000038696"/>
<dbReference type="VGNC" id="VGNC:33662">
    <property type="gene designation" value="RAB8A"/>
</dbReference>
<dbReference type="eggNOG" id="KOG0078">
    <property type="taxonomic scope" value="Eukaryota"/>
</dbReference>
<dbReference type="GeneTree" id="ENSGT00940000157246"/>
<dbReference type="HOGENOM" id="CLU_041217_23_1_1"/>
<dbReference type="InParanoid" id="A4FV54"/>
<dbReference type="OMA" id="SKMEQNE"/>
<dbReference type="OrthoDB" id="9989112at2759"/>
<dbReference type="TreeFam" id="TF314097"/>
<dbReference type="Reactome" id="R-BTA-2565942">
    <property type="pathway name" value="Regulation of PLK1 Activity at G2/M Transition"/>
</dbReference>
<dbReference type="Reactome" id="R-BTA-5620912">
    <property type="pathway name" value="Anchoring of the basal body to the plasma membrane"/>
</dbReference>
<dbReference type="Reactome" id="R-BTA-5620916">
    <property type="pathway name" value="VxPx cargo-targeting to cilium"/>
</dbReference>
<dbReference type="Reactome" id="R-BTA-8854214">
    <property type="pathway name" value="TBC/RABGAPs"/>
</dbReference>
<dbReference type="Reactome" id="R-BTA-8873719">
    <property type="pathway name" value="RAB geranylgeranylation"/>
</dbReference>
<dbReference type="Reactome" id="R-BTA-8876198">
    <property type="pathway name" value="RAB GEFs exchange GTP for GDP on RABs"/>
</dbReference>
<dbReference type="Proteomes" id="UP000009136">
    <property type="component" value="Chromosome 7"/>
</dbReference>
<dbReference type="Bgee" id="ENSBTAG00000038696">
    <property type="expression patterns" value="Expressed in ascending colon and 104 other cell types or tissues"/>
</dbReference>
<dbReference type="GO" id="GO:0005814">
    <property type="term" value="C:centriole"/>
    <property type="evidence" value="ECO:0007669"/>
    <property type="project" value="UniProtKB-SubCell"/>
</dbReference>
<dbReference type="GO" id="GO:0005813">
    <property type="term" value="C:centrosome"/>
    <property type="evidence" value="ECO:0000250"/>
    <property type="project" value="UniProtKB"/>
</dbReference>
<dbReference type="GO" id="GO:0036064">
    <property type="term" value="C:ciliary basal body"/>
    <property type="evidence" value="ECO:0000250"/>
    <property type="project" value="UniProtKB"/>
</dbReference>
<dbReference type="GO" id="GO:0005929">
    <property type="term" value="C:cilium"/>
    <property type="evidence" value="ECO:0000250"/>
    <property type="project" value="UniProtKB"/>
</dbReference>
<dbReference type="GO" id="GO:0005768">
    <property type="term" value="C:endosome"/>
    <property type="evidence" value="ECO:0000318"/>
    <property type="project" value="GO_Central"/>
</dbReference>
<dbReference type="GO" id="GO:0010008">
    <property type="term" value="C:endosome membrane"/>
    <property type="evidence" value="ECO:0000250"/>
    <property type="project" value="UniProtKB"/>
</dbReference>
<dbReference type="GO" id="GO:0005794">
    <property type="term" value="C:Golgi apparatus"/>
    <property type="evidence" value="ECO:0007669"/>
    <property type="project" value="UniProtKB-SubCell"/>
</dbReference>
<dbReference type="GO" id="GO:0005764">
    <property type="term" value="C:lysosome"/>
    <property type="evidence" value="ECO:0007669"/>
    <property type="project" value="UniProtKB-SubCell"/>
</dbReference>
<dbReference type="GO" id="GO:0030496">
    <property type="term" value="C:midbody"/>
    <property type="evidence" value="ECO:0000250"/>
    <property type="project" value="UniProtKB"/>
</dbReference>
<dbReference type="GO" id="GO:0045335">
    <property type="term" value="C:phagocytic vesicle"/>
    <property type="evidence" value="ECO:0000250"/>
    <property type="project" value="UniProtKB"/>
</dbReference>
<dbReference type="GO" id="GO:0030670">
    <property type="term" value="C:phagocytic vesicle membrane"/>
    <property type="evidence" value="ECO:0007669"/>
    <property type="project" value="UniProtKB-SubCell"/>
</dbReference>
<dbReference type="GO" id="GO:0005886">
    <property type="term" value="C:plasma membrane"/>
    <property type="evidence" value="ECO:0000318"/>
    <property type="project" value="GO_Central"/>
</dbReference>
<dbReference type="GO" id="GO:0055038">
    <property type="term" value="C:recycling endosome membrane"/>
    <property type="evidence" value="ECO:0000250"/>
    <property type="project" value="UniProtKB"/>
</dbReference>
<dbReference type="GO" id="GO:0008021">
    <property type="term" value="C:synaptic vesicle"/>
    <property type="evidence" value="ECO:0000318"/>
    <property type="project" value="GO_Central"/>
</dbReference>
<dbReference type="GO" id="GO:0030140">
    <property type="term" value="C:trans-Golgi network transport vesicle"/>
    <property type="evidence" value="ECO:0000318"/>
    <property type="project" value="GO_Central"/>
</dbReference>
<dbReference type="GO" id="GO:0019003">
    <property type="term" value="F:GDP binding"/>
    <property type="evidence" value="ECO:0000250"/>
    <property type="project" value="UniProtKB"/>
</dbReference>
<dbReference type="GO" id="GO:0005525">
    <property type="term" value="F:GTP binding"/>
    <property type="evidence" value="ECO:0000250"/>
    <property type="project" value="UniProtKB"/>
</dbReference>
<dbReference type="GO" id="GO:0003924">
    <property type="term" value="F:GTPase activity"/>
    <property type="evidence" value="ECO:0000318"/>
    <property type="project" value="GO_Central"/>
</dbReference>
<dbReference type="GO" id="GO:0031267">
    <property type="term" value="F:small GTPase binding"/>
    <property type="evidence" value="ECO:0000250"/>
    <property type="project" value="UniProtKB"/>
</dbReference>
<dbReference type="GO" id="GO:0006914">
    <property type="term" value="P:autophagy"/>
    <property type="evidence" value="ECO:0007669"/>
    <property type="project" value="UniProtKB-KW"/>
</dbReference>
<dbReference type="GO" id="GO:0007409">
    <property type="term" value="P:axonogenesis"/>
    <property type="evidence" value="ECO:0000250"/>
    <property type="project" value="UniProtKB"/>
</dbReference>
<dbReference type="GO" id="GO:0032869">
    <property type="term" value="P:cellular response to insulin stimulus"/>
    <property type="evidence" value="ECO:0000250"/>
    <property type="project" value="UniProtKB"/>
</dbReference>
<dbReference type="GO" id="GO:0060271">
    <property type="term" value="P:cilium assembly"/>
    <property type="evidence" value="ECO:0000250"/>
    <property type="project" value="UniProtKB"/>
</dbReference>
<dbReference type="GO" id="GO:0032456">
    <property type="term" value="P:endocytic recycling"/>
    <property type="evidence" value="ECO:0000318"/>
    <property type="project" value="GO_Central"/>
</dbReference>
<dbReference type="GO" id="GO:0006887">
    <property type="term" value="P:exocytosis"/>
    <property type="evidence" value="ECO:0000318"/>
    <property type="project" value="GO_Central"/>
</dbReference>
<dbReference type="GO" id="GO:0007030">
    <property type="term" value="P:Golgi organization"/>
    <property type="evidence" value="ECO:0000250"/>
    <property type="project" value="UniProtKB"/>
</dbReference>
<dbReference type="GO" id="GO:0098969">
    <property type="term" value="P:neurotransmitter receptor transport to postsynaptic membrane"/>
    <property type="evidence" value="ECO:0000318"/>
    <property type="project" value="GO_Central"/>
</dbReference>
<dbReference type="GO" id="GO:0061512">
    <property type="term" value="P:protein localization to cilium"/>
    <property type="evidence" value="ECO:0000250"/>
    <property type="project" value="UniProtKB"/>
</dbReference>
<dbReference type="GO" id="GO:0072659">
    <property type="term" value="P:protein localization to plasma membrane"/>
    <property type="evidence" value="ECO:0000250"/>
    <property type="project" value="UniProtKB"/>
</dbReference>
<dbReference type="GO" id="GO:0010506">
    <property type="term" value="P:regulation of autophagy"/>
    <property type="evidence" value="ECO:0000250"/>
    <property type="project" value="UniProtKB"/>
</dbReference>
<dbReference type="CDD" id="cd01867">
    <property type="entry name" value="Rab8_Rab10_Rab13_like"/>
    <property type="match status" value="1"/>
</dbReference>
<dbReference type="FunFam" id="3.40.50.300:FF:000202">
    <property type="entry name" value="ras-related protein Rab-8A"/>
    <property type="match status" value="1"/>
</dbReference>
<dbReference type="Gene3D" id="3.40.50.300">
    <property type="entry name" value="P-loop containing nucleotide triphosphate hydrolases"/>
    <property type="match status" value="1"/>
</dbReference>
<dbReference type="InterPro" id="IPR027417">
    <property type="entry name" value="P-loop_NTPase"/>
</dbReference>
<dbReference type="InterPro" id="IPR005225">
    <property type="entry name" value="Small_GTP-bd"/>
</dbReference>
<dbReference type="InterPro" id="IPR001806">
    <property type="entry name" value="Small_GTPase"/>
</dbReference>
<dbReference type="InterPro" id="IPR050305">
    <property type="entry name" value="Small_GTPase_Rab"/>
</dbReference>
<dbReference type="NCBIfam" id="TIGR00231">
    <property type="entry name" value="small_GTP"/>
    <property type="match status" value="1"/>
</dbReference>
<dbReference type="PANTHER" id="PTHR47980">
    <property type="entry name" value="LD44762P"/>
    <property type="match status" value="1"/>
</dbReference>
<dbReference type="Pfam" id="PF00071">
    <property type="entry name" value="Ras"/>
    <property type="match status" value="1"/>
</dbReference>
<dbReference type="PRINTS" id="PR00449">
    <property type="entry name" value="RASTRNSFRMNG"/>
</dbReference>
<dbReference type="SMART" id="SM00177">
    <property type="entry name" value="ARF"/>
    <property type="match status" value="1"/>
</dbReference>
<dbReference type="SMART" id="SM00175">
    <property type="entry name" value="RAB"/>
    <property type="match status" value="1"/>
</dbReference>
<dbReference type="SMART" id="SM00176">
    <property type="entry name" value="RAN"/>
    <property type="match status" value="1"/>
</dbReference>
<dbReference type="SMART" id="SM00173">
    <property type="entry name" value="RAS"/>
    <property type="match status" value="1"/>
</dbReference>
<dbReference type="SMART" id="SM00174">
    <property type="entry name" value="RHO"/>
    <property type="match status" value="1"/>
</dbReference>
<dbReference type="SUPFAM" id="SSF52540">
    <property type="entry name" value="P-loop containing nucleoside triphosphate hydrolases"/>
    <property type="match status" value="1"/>
</dbReference>
<dbReference type="PROSITE" id="PS51419">
    <property type="entry name" value="RAB"/>
    <property type="match status" value="1"/>
</dbReference>